<keyword id="KW-1185">Reference proteome</keyword>
<dbReference type="EMBL" id="AE006641">
    <property type="protein sequence ID" value="AAK42698.1"/>
    <property type="molecule type" value="Genomic_DNA"/>
</dbReference>
<dbReference type="PIR" id="C90430">
    <property type="entry name" value="C90430"/>
</dbReference>
<dbReference type="RefSeq" id="WP_009991792.1">
    <property type="nucleotide sequence ID" value="NC_002754.1"/>
</dbReference>
<dbReference type="SMR" id="Q97VP5"/>
<dbReference type="STRING" id="273057.SSO2571"/>
<dbReference type="PaxDb" id="273057-SSO2571"/>
<dbReference type="EnsemblBacteria" id="AAK42698">
    <property type="protein sequence ID" value="AAK42698"/>
    <property type="gene ID" value="SSO2571"/>
</dbReference>
<dbReference type="GeneID" id="44128302"/>
<dbReference type="KEGG" id="sso:SSO2571"/>
<dbReference type="PATRIC" id="fig|273057.12.peg.2653"/>
<dbReference type="eggNOG" id="arCOG04115">
    <property type="taxonomic scope" value="Archaea"/>
</dbReference>
<dbReference type="HOGENOM" id="CLU_052299_1_0_2"/>
<dbReference type="InParanoid" id="Q97VP5"/>
<dbReference type="PhylomeDB" id="Q97VP5"/>
<dbReference type="Proteomes" id="UP000001974">
    <property type="component" value="Chromosome"/>
</dbReference>
<dbReference type="GO" id="GO:0003677">
    <property type="term" value="F:DNA binding"/>
    <property type="evidence" value="ECO:0000318"/>
    <property type="project" value="GO_Central"/>
</dbReference>
<dbReference type="CDD" id="cd22357">
    <property type="entry name" value="SfsA-like"/>
    <property type="match status" value="1"/>
</dbReference>
<dbReference type="FunFam" id="2.40.50.580:FF:000002">
    <property type="entry name" value="Sugar fermentation stimulation protein homolog"/>
    <property type="match status" value="1"/>
</dbReference>
<dbReference type="Gene3D" id="2.40.50.580">
    <property type="match status" value="1"/>
</dbReference>
<dbReference type="Gene3D" id="3.40.1350.60">
    <property type="match status" value="1"/>
</dbReference>
<dbReference type="HAMAP" id="MF_00095">
    <property type="entry name" value="SfsA"/>
    <property type="match status" value="1"/>
</dbReference>
<dbReference type="InterPro" id="IPR005224">
    <property type="entry name" value="SfsA"/>
</dbReference>
<dbReference type="InterPro" id="IPR040452">
    <property type="entry name" value="SfsA_C"/>
</dbReference>
<dbReference type="InterPro" id="IPR041465">
    <property type="entry name" value="SfsA_N"/>
</dbReference>
<dbReference type="NCBIfam" id="TIGR00230">
    <property type="entry name" value="sfsA"/>
    <property type="match status" value="1"/>
</dbReference>
<dbReference type="PANTHER" id="PTHR30545">
    <property type="entry name" value="SUGAR FERMENTATION STIMULATION PROTEIN A"/>
    <property type="match status" value="1"/>
</dbReference>
<dbReference type="PANTHER" id="PTHR30545:SF2">
    <property type="entry name" value="SUGAR FERMENTATION STIMULATION PROTEIN A"/>
    <property type="match status" value="1"/>
</dbReference>
<dbReference type="Pfam" id="PF03749">
    <property type="entry name" value="SfsA"/>
    <property type="match status" value="1"/>
</dbReference>
<dbReference type="Pfam" id="PF17746">
    <property type="entry name" value="SfsA_N"/>
    <property type="match status" value="1"/>
</dbReference>
<evidence type="ECO:0000255" key="1">
    <source>
        <dbReference type="HAMAP-Rule" id="MF_00095"/>
    </source>
</evidence>
<sequence length="240" mass="27830">MNESNSQDLTRVSPFYIKEGFSVYEFTEKLFEAYVIERINRFLVKVTLDGEEILVHLHDPGRLKELIYPGNLVLIRETKGNKTKFSITAAYANSRFIVLDSRLHNIIASKFIPKIYEKEVKVGNSRIDFKYDNTYLEVKGCTLVENEIAYFPDAPTERGRKHLKELRELMRKGFNAILLILVMRNDAKCFLPNEKTDPKFSVEFWDSIKEGLKVYIKTFSLIGNKIVYVGDIPLCKTNLT</sequence>
<name>SFSA_SACS2</name>
<gene>
    <name evidence="1" type="primary">sfsA</name>
    <name type="ordered locus">SSO2571</name>
</gene>
<organism>
    <name type="scientific">Saccharolobus solfataricus (strain ATCC 35092 / DSM 1617 / JCM 11322 / P2)</name>
    <name type="common">Sulfolobus solfataricus</name>
    <dbReference type="NCBI Taxonomy" id="273057"/>
    <lineage>
        <taxon>Archaea</taxon>
        <taxon>Thermoproteota</taxon>
        <taxon>Thermoprotei</taxon>
        <taxon>Sulfolobales</taxon>
        <taxon>Sulfolobaceae</taxon>
        <taxon>Saccharolobus</taxon>
    </lineage>
</organism>
<feature type="chain" id="PRO_0000152328" description="Sugar fermentation stimulation protein homolog">
    <location>
        <begin position="1"/>
        <end position="240"/>
    </location>
</feature>
<comment type="similarity">
    <text evidence="1">Belongs to the SfsA family.</text>
</comment>
<accession>Q97VP5</accession>
<protein>
    <recommendedName>
        <fullName evidence="1">Sugar fermentation stimulation protein homolog</fullName>
    </recommendedName>
</protein>
<proteinExistence type="inferred from homology"/>
<reference key="1">
    <citation type="journal article" date="2001" name="Proc. Natl. Acad. Sci. U.S.A.">
        <title>The complete genome of the crenarchaeon Sulfolobus solfataricus P2.</title>
        <authorList>
            <person name="She Q."/>
            <person name="Singh R.K."/>
            <person name="Confalonieri F."/>
            <person name="Zivanovic Y."/>
            <person name="Allard G."/>
            <person name="Awayez M.J."/>
            <person name="Chan-Weiher C.C.-Y."/>
            <person name="Clausen I.G."/>
            <person name="Curtis B.A."/>
            <person name="De Moors A."/>
            <person name="Erauso G."/>
            <person name="Fletcher C."/>
            <person name="Gordon P.M.K."/>
            <person name="Heikamp-de Jong I."/>
            <person name="Jeffries A.C."/>
            <person name="Kozera C.J."/>
            <person name="Medina N."/>
            <person name="Peng X."/>
            <person name="Thi-Ngoc H.P."/>
            <person name="Redder P."/>
            <person name="Schenk M.E."/>
            <person name="Theriault C."/>
            <person name="Tolstrup N."/>
            <person name="Charlebois R.L."/>
            <person name="Doolittle W.F."/>
            <person name="Duguet M."/>
            <person name="Gaasterland T."/>
            <person name="Garrett R.A."/>
            <person name="Ragan M.A."/>
            <person name="Sensen C.W."/>
            <person name="Van der Oost J."/>
        </authorList>
    </citation>
    <scope>NUCLEOTIDE SEQUENCE [LARGE SCALE GENOMIC DNA]</scope>
    <source>
        <strain>ATCC 35092 / DSM 1617 / JCM 11322 / P2</strain>
    </source>
</reference>